<accession>Q4JXA4</accession>
<proteinExistence type="inferred from homology"/>
<dbReference type="EC" id="2.5.1.7" evidence="1"/>
<dbReference type="EMBL" id="CR931997">
    <property type="protein sequence ID" value="CAI36553.1"/>
    <property type="molecule type" value="Genomic_DNA"/>
</dbReference>
<dbReference type="RefSeq" id="WP_011273090.1">
    <property type="nucleotide sequence ID" value="NC_007164.1"/>
</dbReference>
<dbReference type="SMR" id="Q4JXA4"/>
<dbReference type="STRING" id="306537.jk0398"/>
<dbReference type="KEGG" id="cjk:jk0398"/>
<dbReference type="PATRIC" id="fig|306537.10.peg.410"/>
<dbReference type="eggNOG" id="COG0766">
    <property type="taxonomic scope" value="Bacteria"/>
</dbReference>
<dbReference type="HOGENOM" id="CLU_027387_0_0_11"/>
<dbReference type="OrthoDB" id="9803760at2"/>
<dbReference type="UniPathway" id="UPA00219"/>
<dbReference type="Proteomes" id="UP000000545">
    <property type="component" value="Chromosome"/>
</dbReference>
<dbReference type="GO" id="GO:0005737">
    <property type="term" value="C:cytoplasm"/>
    <property type="evidence" value="ECO:0007669"/>
    <property type="project" value="UniProtKB-SubCell"/>
</dbReference>
<dbReference type="GO" id="GO:0008760">
    <property type="term" value="F:UDP-N-acetylglucosamine 1-carboxyvinyltransferase activity"/>
    <property type="evidence" value="ECO:0007669"/>
    <property type="project" value="UniProtKB-UniRule"/>
</dbReference>
<dbReference type="GO" id="GO:0051301">
    <property type="term" value="P:cell division"/>
    <property type="evidence" value="ECO:0007669"/>
    <property type="project" value="UniProtKB-KW"/>
</dbReference>
<dbReference type="GO" id="GO:0071555">
    <property type="term" value="P:cell wall organization"/>
    <property type="evidence" value="ECO:0007669"/>
    <property type="project" value="UniProtKB-KW"/>
</dbReference>
<dbReference type="GO" id="GO:0009252">
    <property type="term" value="P:peptidoglycan biosynthetic process"/>
    <property type="evidence" value="ECO:0007669"/>
    <property type="project" value="UniProtKB-UniRule"/>
</dbReference>
<dbReference type="GO" id="GO:0008360">
    <property type="term" value="P:regulation of cell shape"/>
    <property type="evidence" value="ECO:0007669"/>
    <property type="project" value="UniProtKB-KW"/>
</dbReference>
<dbReference type="GO" id="GO:0019277">
    <property type="term" value="P:UDP-N-acetylgalactosamine biosynthetic process"/>
    <property type="evidence" value="ECO:0007669"/>
    <property type="project" value="InterPro"/>
</dbReference>
<dbReference type="CDD" id="cd01555">
    <property type="entry name" value="UdpNAET"/>
    <property type="match status" value="1"/>
</dbReference>
<dbReference type="Gene3D" id="3.65.10.10">
    <property type="entry name" value="Enolpyruvate transferase domain"/>
    <property type="match status" value="2"/>
</dbReference>
<dbReference type="HAMAP" id="MF_00111">
    <property type="entry name" value="MurA"/>
    <property type="match status" value="1"/>
</dbReference>
<dbReference type="InterPro" id="IPR001986">
    <property type="entry name" value="Enolpyruvate_Tfrase_dom"/>
</dbReference>
<dbReference type="InterPro" id="IPR036968">
    <property type="entry name" value="Enolpyruvate_Tfrase_sf"/>
</dbReference>
<dbReference type="InterPro" id="IPR050068">
    <property type="entry name" value="MurA_subfamily"/>
</dbReference>
<dbReference type="InterPro" id="IPR013792">
    <property type="entry name" value="RNA3'P_cycl/enolpyr_Trfase_a/b"/>
</dbReference>
<dbReference type="InterPro" id="IPR005750">
    <property type="entry name" value="UDP_GlcNAc_COvinyl_MurA"/>
</dbReference>
<dbReference type="NCBIfam" id="TIGR01072">
    <property type="entry name" value="murA"/>
    <property type="match status" value="1"/>
</dbReference>
<dbReference type="NCBIfam" id="NF006873">
    <property type="entry name" value="PRK09369.1"/>
    <property type="match status" value="1"/>
</dbReference>
<dbReference type="PANTHER" id="PTHR43783">
    <property type="entry name" value="UDP-N-ACETYLGLUCOSAMINE 1-CARBOXYVINYLTRANSFERASE"/>
    <property type="match status" value="1"/>
</dbReference>
<dbReference type="PANTHER" id="PTHR43783:SF1">
    <property type="entry name" value="UDP-N-ACETYLGLUCOSAMINE 1-CARBOXYVINYLTRANSFERASE"/>
    <property type="match status" value="1"/>
</dbReference>
<dbReference type="Pfam" id="PF00275">
    <property type="entry name" value="EPSP_synthase"/>
    <property type="match status" value="1"/>
</dbReference>
<dbReference type="SUPFAM" id="SSF55205">
    <property type="entry name" value="EPT/RTPC-like"/>
    <property type="match status" value="1"/>
</dbReference>
<protein>
    <recommendedName>
        <fullName evidence="1">UDP-N-acetylglucosamine 1-carboxyvinyltransferase</fullName>
        <ecNumber evidence="1">2.5.1.7</ecNumber>
    </recommendedName>
    <alternativeName>
        <fullName evidence="1">Enoylpyruvate transferase</fullName>
    </alternativeName>
    <alternativeName>
        <fullName evidence="1">UDP-N-acetylglucosamine enolpyruvyl transferase</fullName>
        <shortName evidence="1">EPT</shortName>
    </alternativeName>
</protein>
<sequence length="418" mass="44678">MKDSFVVTGGTRLQGAIKVSGAKNSVLKLMSAALLAPGTTMLTNCPEIADVPYMAEVLRGLGCEVELDGDVVRITTPESIEYNADFEAVRQFRASVAVLGPLTSRCHKARVALPGGDAIGSRPLDMHQSGLELLGATTKIEHGCLVAEAEELRGAQIKLDFPSVGATENILTAAVLAEGTTTLDNAAREPEIVDLCNMLVAMGAKIDGAGSNTITVEGVDRLNPVDHEVVGDRIVAGTWAYAAAMTRGDITVGGIDPQHLHLVLEKLKLAGAQVETYPTGFRVVQNERPKAVDYQTLPFPGFPTDLQPMAIALCTVSEGMSVITENIFESRFRFVDEMMRLGADASIDGHHVVIRGREQLSSAPVWSSDIRAGAGLVLAGLVADGKTEVHDVYHIDRGYPEFPEQLRSLGAEVERVQR</sequence>
<evidence type="ECO:0000255" key="1">
    <source>
        <dbReference type="HAMAP-Rule" id="MF_00111"/>
    </source>
</evidence>
<name>MURA_CORJK</name>
<gene>
    <name evidence="1" type="primary">murA</name>
    <name type="ordered locus">jk0398</name>
</gene>
<feature type="chain" id="PRO_0000231196" description="UDP-N-acetylglucosamine 1-carboxyvinyltransferase">
    <location>
        <begin position="1"/>
        <end position="418"/>
    </location>
</feature>
<feature type="active site" description="Proton donor" evidence="1">
    <location>
        <position position="117"/>
    </location>
</feature>
<feature type="binding site" evidence="1">
    <location>
        <begin position="23"/>
        <end position="24"/>
    </location>
    <ligand>
        <name>phosphoenolpyruvate</name>
        <dbReference type="ChEBI" id="CHEBI:58702"/>
    </ligand>
</feature>
<feature type="binding site" evidence="1">
    <location>
        <position position="93"/>
    </location>
    <ligand>
        <name>UDP-N-acetyl-alpha-D-glucosamine</name>
        <dbReference type="ChEBI" id="CHEBI:57705"/>
    </ligand>
</feature>
<feature type="binding site" evidence="1">
    <location>
        <position position="305"/>
    </location>
    <ligand>
        <name>UDP-N-acetyl-alpha-D-glucosamine</name>
        <dbReference type="ChEBI" id="CHEBI:57705"/>
    </ligand>
</feature>
<feature type="binding site" evidence="1">
    <location>
        <position position="327"/>
    </location>
    <ligand>
        <name>UDP-N-acetyl-alpha-D-glucosamine</name>
        <dbReference type="ChEBI" id="CHEBI:57705"/>
    </ligand>
</feature>
<keyword id="KW-0131">Cell cycle</keyword>
<keyword id="KW-0132">Cell division</keyword>
<keyword id="KW-0133">Cell shape</keyword>
<keyword id="KW-0961">Cell wall biogenesis/degradation</keyword>
<keyword id="KW-0963">Cytoplasm</keyword>
<keyword id="KW-0573">Peptidoglycan synthesis</keyword>
<keyword id="KW-1185">Reference proteome</keyword>
<keyword id="KW-0808">Transferase</keyword>
<comment type="function">
    <text evidence="1">Cell wall formation. Adds enolpyruvyl to UDP-N-acetylglucosamine.</text>
</comment>
<comment type="catalytic activity">
    <reaction evidence="1">
        <text>phosphoenolpyruvate + UDP-N-acetyl-alpha-D-glucosamine = UDP-N-acetyl-3-O-(1-carboxyvinyl)-alpha-D-glucosamine + phosphate</text>
        <dbReference type="Rhea" id="RHEA:18681"/>
        <dbReference type="ChEBI" id="CHEBI:43474"/>
        <dbReference type="ChEBI" id="CHEBI:57705"/>
        <dbReference type="ChEBI" id="CHEBI:58702"/>
        <dbReference type="ChEBI" id="CHEBI:68483"/>
        <dbReference type="EC" id="2.5.1.7"/>
    </reaction>
</comment>
<comment type="pathway">
    <text evidence="1">Cell wall biogenesis; peptidoglycan biosynthesis.</text>
</comment>
<comment type="subcellular location">
    <subcellularLocation>
        <location evidence="1">Cytoplasm</location>
    </subcellularLocation>
</comment>
<comment type="similarity">
    <text evidence="1">Belongs to the EPSP synthase family. MurA subfamily.</text>
</comment>
<organism>
    <name type="scientific">Corynebacterium jeikeium (strain K411)</name>
    <dbReference type="NCBI Taxonomy" id="306537"/>
    <lineage>
        <taxon>Bacteria</taxon>
        <taxon>Bacillati</taxon>
        <taxon>Actinomycetota</taxon>
        <taxon>Actinomycetes</taxon>
        <taxon>Mycobacteriales</taxon>
        <taxon>Corynebacteriaceae</taxon>
        <taxon>Corynebacterium</taxon>
    </lineage>
</organism>
<reference key="1">
    <citation type="journal article" date="2005" name="J. Bacteriol.">
        <title>Complete genome sequence and analysis of the multiresistant nosocomial pathogen Corynebacterium jeikeium K411, a lipid-requiring bacterium of the human skin flora.</title>
        <authorList>
            <person name="Tauch A."/>
            <person name="Kaiser O."/>
            <person name="Hain T."/>
            <person name="Goesmann A."/>
            <person name="Weisshaar B."/>
            <person name="Albersmeier A."/>
            <person name="Bekel T."/>
            <person name="Bischoff N."/>
            <person name="Brune I."/>
            <person name="Chakraborty T."/>
            <person name="Kalinowski J."/>
            <person name="Meyer F."/>
            <person name="Rupp O."/>
            <person name="Schneiker S."/>
            <person name="Viehoever P."/>
            <person name="Puehler A."/>
        </authorList>
    </citation>
    <scope>NUCLEOTIDE SEQUENCE [LARGE SCALE GENOMIC DNA]</scope>
    <source>
        <strain>K411</strain>
    </source>
</reference>